<reference key="1">
    <citation type="submission" date="2007-05" db="EMBL/GenBank/DDBJ databases">
        <title>Complete sequence of Dehalococcoides sp. BAV1.</title>
        <authorList>
            <consortium name="US DOE Joint Genome Institute"/>
            <person name="Copeland A."/>
            <person name="Lucas S."/>
            <person name="Lapidus A."/>
            <person name="Barry K."/>
            <person name="Detter J.C."/>
            <person name="Glavina del Rio T."/>
            <person name="Hammon N."/>
            <person name="Israni S."/>
            <person name="Pitluck S."/>
            <person name="Lowry S."/>
            <person name="Clum A."/>
            <person name="Schmutz J."/>
            <person name="Larimer F."/>
            <person name="Land M."/>
            <person name="Hauser L."/>
            <person name="Kyrpides N."/>
            <person name="Kim E."/>
            <person name="Ritalahti K.M."/>
            <person name="Loeffler F."/>
            <person name="Richardson P."/>
        </authorList>
    </citation>
    <scope>NUCLEOTIDE SEQUENCE [LARGE SCALE GENOMIC DNA]</scope>
    <source>
        <strain>ATCC BAA-2100 / JCM 16839 / KCTC 5957 / BAV1</strain>
    </source>
</reference>
<gene>
    <name evidence="1" type="primary">cobQ</name>
    <name type="ordered locus">DehaBAV1_0820</name>
</gene>
<accession>A5FQW8</accession>
<sequence>MAKLIMVQGTSSNVGKSILVTALCRIFKQDGYKVAPYKSQNMALNAFVTKEGGEIGRAQAVQAEACGIEPSVDMNPILMKPEADSRSQIIVNGKVDRTISAREYYEYAPLLLDTALAALNRLREKNDIVVIEGAGSPAEINLKQREIVNMRIAKEASAPVLLAGDIDRGGVFASLIGTIDLLEPDERYYIKGYLINKFRGDASLLKPAIDVLEDRTSIPVLGIIPYLRNMAIAQEDSVYLDECKGNLGETDLDIAVIRLPRISNYDDFDALATDGASVRFVSKTAEIGNPDLIIIPGTKSTIPDMEYLEQSGLAETIIKKARKGTHVLGVCGGYQILGKMIYDPHKTESETTELKGLGLLDTETTFEKEKATTQISGQVKFDSGLLSGLAGCAVSGYEIHMGRTRLFSAQPAFHITKTPKGPADYLDGASNAEGTVLGTYIHGIFENAAFRRGFLNAIRRHKGIPERQADYFDRDKEYDKLADIVRASIDMEKIYAILNEGIR</sequence>
<comment type="function">
    <text evidence="1">Catalyzes amidations at positions B, D, E, and G on adenosylcobyrinic A,C-diamide. NH(2) groups are provided by glutamine, and one molecule of ATP is hydrogenolyzed for each amidation.</text>
</comment>
<comment type="pathway">
    <text evidence="1">Cofactor biosynthesis; adenosylcobalamin biosynthesis.</text>
</comment>
<comment type="similarity">
    <text evidence="1">Belongs to the CobB/CobQ family. CobQ subfamily.</text>
</comment>
<proteinExistence type="inferred from homology"/>
<dbReference type="EMBL" id="CP000688">
    <property type="protein sequence ID" value="ABQ17403.1"/>
    <property type="molecule type" value="Genomic_DNA"/>
</dbReference>
<dbReference type="SMR" id="A5FQW8"/>
<dbReference type="KEGG" id="deb:DehaBAV1_0820"/>
<dbReference type="PATRIC" id="fig|216389.18.peg.869"/>
<dbReference type="HOGENOM" id="CLU_019250_2_2_0"/>
<dbReference type="UniPathway" id="UPA00148"/>
<dbReference type="GO" id="GO:0015420">
    <property type="term" value="F:ABC-type vitamin B12 transporter activity"/>
    <property type="evidence" value="ECO:0007669"/>
    <property type="project" value="UniProtKB-UniRule"/>
</dbReference>
<dbReference type="GO" id="GO:0003824">
    <property type="term" value="F:catalytic activity"/>
    <property type="evidence" value="ECO:0007669"/>
    <property type="project" value="InterPro"/>
</dbReference>
<dbReference type="GO" id="GO:0009236">
    <property type="term" value="P:cobalamin biosynthetic process"/>
    <property type="evidence" value="ECO:0007669"/>
    <property type="project" value="UniProtKB-UniRule"/>
</dbReference>
<dbReference type="CDD" id="cd05389">
    <property type="entry name" value="CobQ_N"/>
    <property type="match status" value="1"/>
</dbReference>
<dbReference type="CDD" id="cd01750">
    <property type="entry name" value="GATase1_CobQ"/>
    <property type="match status" value="1"/>
</dbReference>
<dbReference type="Gene3D" id="3.40.50.880">
    <property type="match status" value="1"/>
</dbReference>
<dbReference type="Gene3D" id="3.40.50.300">
    <property type="entry name" value="P-loop containing nucleotide triphosphate hydrolases"/>
    <property type="match status" value="1"/>
</dbReference>
<dbReference type="HAMAP" id="MF_00028">
    <property type="entry name" value="CobQ"/>
    <property type="match status" value="1"/>
</dbReference>
<dbReference type="InterPro" id="IPR029062">
    <property type="entry name" value="Class_I_gatase-like"/>
</dbReference>
<dbReference type="InterPro" id="IPR002586">
    <property type="entry name" value="CobQ/CobB/MinD/ParA_Nub-bd_dom"/>
</dbReference>
<dbReference type="InterPro" id="IPR033949">
    <property type="entry name" value="CobQ_GATase1"/>
</dbReference>
<dbReference type="InterPro" id="IPR047045">
    <property type="entry name" value="CobQ_N"/>
</dbReference>
<dbReference type="InterPro" id="IPR004459">
    <property type="entry name" value="CobQ_synth"/>
</dbReference>
<dbReference type="InterPro" id="IPR011698">
    <property type="entry name" value="GATase_3"/>
</dbReference>
<dbReference type="InterPro" id="IPR027417">
    <property type="entry name" value="P-loop_NTPase"/>
</dbReference>
<dbReference type="NCBIfam" id="TIGR00313">
    <property type="entry name" value="cobQ"/>
    <property type="match status" value="1"/>
</dbReference>
<dbReference type="NCBIfam" id="NF001989">
    <property type="entry name" value="PRK00784.1"/>
    <property type="match status" value="1"/>
</dbReference>
<dbReference type="PANTHER" id="PTHR21343:SF1">
    <property type="entry name" value="COBYRIC ACID SYNTHASE"/>
    <property type="match status" value="1"/>
</dbReference>
<dbReference type="PANTHER" id="PTHR21343">
    <property type="entry name" value="DETHIOBIOTIN SYNTHETASE"/>
    <property type="match status" value="1"/>
</dbReference>
<dbReference type="Pfam" id="PF01656">
    <property type="entry name" value="CbiA"/>
    <property type="match status" value="1"/>
</dbReference>
<dbReference type="Pfam" id="PF07685">
    <property type="entry name" value="GATase_3"/>
    <property type="match status" value="1"/>
</dbReference>
<dbReference type="SUPFAM" id="SSF52317">
    <property type="entry name" value="Class I glutamine amidotransferase-like"/>
    <property type="match status" value="1"/>
</dbReference>
<dbReference type="SUPFAM" id="SSF52540">
    <property type="entry name" value="P-loop containing nucleoside triphosphate hydrolases"/>
    <property type="match status" value="1"/>
</dbReference>
<dbReference type="PROSITE" id="PS51274">
    <property type="entry name" value="GATASE_COBBQ"/>
    <property type="match status" value="1"/>
</dbReference>
<name>COBQ_DEHMB</name>
<keyword id="KW-0169">Cobalamin biosynthesis</keyword>
<keyword id="KW-0315">Glutamine amidotransferase</keyword>
<protein>
    <recommendedName>
        <fullName evidence="1">Cobyric acid synthase</fullName>
    </recommendedName>
</protein>
<feature type="chain" id="PRO_1000074399" description="Cobyric acid synthase">
    <location>
        <begin position="1"/>
        <end position="503"/>
    </location>
</feature>
<feature type="domain" description="GATase cobBQ-type" evidence="1">
    <location>
        <begin position="251"/>
        <end position="450"/>
    </location>
</feature>
<feature type="active site" description="Nucleophile" evidence="1">
    <location>
        <position position="331"/>
    </location>
</feature>
<feature type="active site" evidence="1">
    <location>
        <position position="442"/>
    </location>
</feature>
<organism>
    <name type="scientific">Dehalococcoides mccartyi (strain ATCC BAA-2100 / JCM 16839 / KCTC 5957 / BAV1)</name>
    <dbReference type="NCBI Taxonomy" id="216389"/>
    <lineage>
        <taxon>Bacteria</taxon>
        <taxon>Bacillati</taxon>
        <taxon>Chloroflexota</taxon>
        <taxon>Dehalococcoidia</taxon>
        <taxon>Dehalococcoidales</taxon>
        <taxon>Dehalococcoidaceae</taxon>
        <taxon>Dehalococcoides</taxon>
    </lineage>
</organism>
<evidence type="ECO:0000255" key="1">
    <source>
        <dbReference type="HAMAP-Rule" id="MF_00028"/>
    </source>
</evidence>